<comment type="function">
    <text evidence="1">An aminoacyl-tRNA editing enzyme that deacylates mischarged D-aminoacyl-tRNAs. Also deacylates mischarged glycyl-tRNA(Ala), protecting cells against glycine mischarging by AlaRS. Acts via tRNA-based rather than protein-based catalysis; rejects L-amino acids rather than detecting D-amino acids in the active site. By recycling D-aminoacyl-tRNA to D-amino acids and free tRNA molecules, this enzyme counteracts the toxicity associated with the formation of D-aminoacyl-tRNA entities in vivo and helps enforce protein L-homochirality.</text>
</comment>
<comment type="catalytic activity">
    <reaction evidence="1">
        <text>glycyl-tRNA(Ala) + H2O = tRNA(Ala) + glycine + H(+)</text>
        <dbReference type="Rhea" id="RHEA:53744"/>
        <dbReference type="Rhea" id="RHEA-COMP:9657"/>
        <dbReference type="Rhea" id="RHEA-COMP:13640"/>
        <dbReference type="ChEBI" id="CHEBI:15377"/>
        <dbReference type="ChEBI" id="CHEBI:15378"/>
        <dbReference type="ChEBI" id="CHEBI:57305"/>
        <dbReference type="ChEBI" id="CHEBI:78442"/>
        <dbReference type="ChEBI" id="CHEBI:78522"/>
        <dbReference type="EC" id="3.1.1.96"/>
    </reaction>
</comment>
<comment type="catalytic activity">
    <reaction evidence="1">
        <text>a D-aminoacyl-tRNA + H2O = a tRNA + a D-alpha-amino acid + H(+)</text>
        <dbReference type="Rhea" id="RHEA:13953"/>
        <dbReference type="Rhea" id="RHEA-COMP:10123"/>
        <dbReference type="Rhea" id="RHEA-COMP:10124"/>
        <dbReference type="ChEBI" id="CHEBI:15377"/>
        <dbReference type="ChEBI" id="CHEBI:15378"/>
        <dbReference type="ChEBI" id="CHEBI:59871"/>
        <dbReference type="ChEBI" id="CHEBI:78442"/>
        <dbReference type="ChEBI" id="CHEBI:79333"/>
        <dbReference type="EC" id="3.1.1.96"/>
    </reaction>
</comment>
<comment type="subunit">
    <text evidence="1">Homodimer.</text>
</comment>
<comment type="subcellular location">
    <subcellularLocation>
        <location evidence="1">Cytoplasm</location>
    </subcellularLocation>
</comment>
<comment type="domain">
    <text evidence="1">A Gly-cisPro motif from one monomer fits into the active site of the other monomer to allow specific chiral rejection of L-amino acids.</text>
</comment>
<comment type="similarity">
    <text evidence="1">Belongs to the DTD family.</text>
</comment>
<organism>
    <name type="scientific">Vibrio cholerae serotype O1 (strain M66-2)</name>
    <dbReference type="NCBI Taxonomy" id="579112"/>
    <lineage>
        <taxon>Bacteria</taxon>
        <taxon>Pseudomonadati</taxon>
        <taxon>Pseudomonadota</taxon>
        <taxon>Gammaproteobacteria</taxon>
        <taxon>Vibrionales</taxon>
        <taxon>Vibrionaceae</taxon>
        <taxon>Vibrio</taxon>
    </lineage>
</organism>
<keyword id="KW-0963">Cytoplasm</keyword>
<keyword id="KW-0378">Hydrolase</keyword>
<keyword id="KW-0694">RNA-binding</keyword>
<keyword id="KW-0820">tRNA-binding</keyword>
<protein>
    <recommendedName>
        <fullName evidence="1">D-aminoacyl-tRNA deacylase</fullName>
        <shortName evidence="1">DTD</shortName>
        <ecNumber evidence="1">3.1.1.96</ecNumber>
    </recommendedName>
    <alternativeName>
        <fullName evidence="1">Gly-tRNA(Ala) deacylase</fullName>
    </alternativeName>
</protein>
<proteinExistence type="inferred from homology"/>
<gene>
    <name evidence="1" type="primary">dtd</name>
    <name type="ordered locus">VCM66_2661</name>
</gene>
<feature type="chain" id="PRO_1000146222" description="D-aminoacyl-tRNA deacylase">
    <location>
        <begin position="1"/>
        <end position="144"/>
    </location>
</feature>
<feature type="short sequence motif" description="Gly-cisPro motif, important for rejection of L-amino acids" evidence="1">
    <location>
        <begin position="136"/>
        <end position="137"/>
    </location>
</feature>
<dbReference type="EC" id="3.1.1.96" evidence="1"/>
<dbReference type="EMBL" id="CP001233">
    <property type="protein sequence ID" value="ACP06955.1"/>
    <property type="molecule type" value="Genomic_DNA"/>
</dbReference>
<dbReference type="RefSeq" id="WP_000560961.1">
    <property type="nucleotide sequence ID" value="NC_012578.1"/>
</dbReference>
<dbReference type="SMR" id="C3LSG8"/>
<dbReference type="GeneID" id="89513272"/>
<dbReference type="KEGG" id="vcm:VCM66_2661"/>
<dbReference type="HOGENOM" id="CLU_076901_1_1_6"/>
<dbReference type="Proteomes" id="UP000001217">
    <property type="component" value="Chromosome I"/>
</dbReference>
<dbReference type="GO" id="GO:0005737">
    <property type="term" value="C:cytoplasm"/>
    <property type="evidence" value="ECO:0007669"/>
    <property type="project" value="UniProtKB-SubCell"/>
</dbReference>
<dbReference type="GO" id="GO:0051500">
    <property type="term" value="F:D-tyrosyl-tRNA(Tyr) deacylase activity"/>
    <property type="evidence" value="ECO:0007669"/>
    <property type="project" value="TreeGrafter"/>
</dbReference>
<dbReference type="GO" id="GO:0106026">
    <property type="term" value="F:Gly-tRNA(Ala) deacylase activity"/>
    <property type="evidence" value="ECO:0007669"/>
    <property type="project" value="UniProtKB-UniRule"/>
</dbReference>
<dbReference type="GO" id="GO:0043908">
    <property type="term" value="F:Ser(Gly)-tRNA(Ala) hydrolase activity"/>
    <property type="evidence" value="ECO:0007669"/>
    <property type="project" value="UniProtKB-UniRule"/>
</dbReference>
<dbReference type="GO" id="GO:0000049">
    <property type="term" value="F:tRNA binding"/>
    <property type="evidence" value="ECO:0007669"/>
    <property type="project" value="UniProtKB-UniRule"/>
</dbReference>
<dbReference type="GO" id="GO:0019478">
    <property type="term" value="P:D-amino acid catabolic process"/>
    <property type="evidence" value="ECO:0007669"/>
    <property type="project" value="UniProtKB-UniRule"/>
</dbReference>
<dbReference type="CDD" id="cd00563">
    <property type="entry name" value="Dtyr_deacylase"/>
    <property type="match status" value="1"/>
</dbReference>
<dbReference type="FunFam" id="3.50.80.10:FF:000001">
    <property type="entry name" value="D-aminoacyl-tRNA deacylase"/>
    <property type="match status" value="1"/>
</dbReference>
<dbReference type="Gene3D" id="3.50.80.10">
    <property type="entry name" value="D-tyrosyl-tRNA(Tyr) deacylase"/>
    <property type="match status" value="1"/>
</dbReference>
<dbReference type="HAMAP" id="MF_00518">
    <property type="entry name" value="Deacylase_Dtd"/>
    <property type="match status" value="1"/>
</dbReference>
<dbReference type="InterPro" id="IPR003732">
    <property type="entry name" value="Daa-tRNA_deacyls_DTD"/>
</dbReference>
<dbReference type="InterPro" id="IPR023509">
    <property type="entry name" value="DTD-like_sf"/>
</dbReference>
<dbReference type="NCBIfam" id="TIGR00256">
    <property type="entry name" value="D-aminoacyl-tRNA deacylase"/>
    <property type="match status" value="1"/>
</dbReference>
<dbReference type="PANTHER" id="PTHR10472:SF5">
    <property type="entry name" value="D-AMINOACYL-TRNA DEACYLASE 1"/>
    <property type="match status" value="1"/>
</dbReference>
<dbReference type="PANTHER" id="PTHR10472">
    <property type="entry name" value="D-TYROSYL-TRNA TYR DEACYLASE"/>
    <property type="match status" value="1"/>
</dbReference>
<dbReference type="Pfam" id="PF02580">
    <property type="entry name" value="Tyr_Deacylase"/>
    <property type="match status" value="1"/>
</dbReference>
<dbReference type="SUPFAM" id="SSF69500">
    <property type="entry name" value="DTD-like"/>
    <property type="match status" value="1"/>
</dbReference>
<evidence type="ECO:0000255" key="1">
    <source>
        <dbReference type="HAMAP-Rule" id="MF_00518"/>
    </source>
</evidence>
<name>DTD_VIBCM</name>
<accession>C3LSG8</accession>
<reference key="1">
    <citation type="journal article" date="2008" name="PLoS ONE">
        <title>A recalibrated molecular clock and independent origins for the cholera pandemic clones.</title>
        <authorList>
            <person name="Feng L."/>
            <person name="Reeves P.R."/>
            <person name="Lan R."/>
            <person name="Ren Y."/>
            <person name="Gao C."/>
            <person name="Zhou Z."/>
            <person name="Ren Y."/>
            <person name="Cheng J."/>
            <person name="Wang W."/>
            <person name="Wang J."/>
            <person name="Qian W."/>
            <person name="Li D."/>
            <person name="Wang L."/>
        </authorList>
    </citation>
    <scope>NUCLEOTIDE SEQUENCE [LARGE SCALE GENOMIC DNA]</scope>
    <source>
        <strain>M66-2</strain>
    </source>
</reference>
<sequence>MIALIQRVSEAAVRVDGEVVGAIDKGLLVLLGVEREDDEAKAKRLVERVTSYRVFEDSEGKMNLSVKDVGGSVLVVSQFTLPADTKKGTRAGFSRGAAPQEAERLYDYFSDLCAQILPTERGRFAADMKVSLINDGPVTFWLQA</sequence>